<organism>
    <name type="scientific">Bacillus caldotenax</name>
    <dbReference type="NCBI Taxonomy" id="1395"/>
    <lineage>
        <taxon>Bacteria</taxon>
        <taxon>Bacillati</taxon>
        <taxon>Bacillota</taxon>
        <taxon>Bacilli</taxon>
        <taxon>Bacillales</taxon>
        <taxon>Anoxybacillaceae</taxon>
        <taxon>Geobacillus</taxon>
        <taxon>Geobacillus thermoleovorans group</taxon>
    </lineage>
</organism>
<accession>P41009</accession>
<reference key="1">
    <citation type="submission" date="1994-08" db="EMBL/GenBank/DDBJ databases">
        <title>Nucleotide sequence of the gene for subunits of proton-ATPase from Bacillus caldotenax.</title>
        <authorList>
            <person name="Ishizuka M."/>
        </authorList>
    </citation>
    <scope>NUCLEOTIDE SEQUENCE [GENOMIC DNA]</scope>
</reference>
<protein>
    <recommendedName>
        <fullName evidence="1">ATP synthase subunit beta</fullName>
        <ecNumber evidence="1">7.1.2.2</ecNumber>
    </recommendedName>
    <alternativeName>
        <fullName evidence="1">ATP synthase F1 sector subunit beta</fullName>
    </alternativeName>
    <alternativeName>
        <fullName evidence="1">F-ATPase subunit beta</fullName>
    </alternativeName>
</protein>
<comment type="function">
    <text evidence="1">Produces ATP from ADP in the presence of a proton gradient across the membrane. The catalytic sites are hosted primarily by the beta subunits.</text>
</comment>
<comment type="catalytic activity">
    <reaction evidence="1">
        <text>ATP + H2O + 4 H(+)(in) = ADP + phosphate + 5 H(+)(out)</text>
        <dbReference type="Rhea" id="RHEA:57720"/>
        <dbReference type="ChEBI" id="CHEBI:15377"/>
        <dbReference type="ChEBI" id="CHEBI:15378"/>
        <dbReference type="ChEBI" id="CHEBI:30616"/>
        <dbReference type="ChEBI" id="CHEBI:43474"/>
        <dbReference type="ChEBI" id="CHEBI:456216"/>
        <dbReference type="EC" id="7.1.2.2"/>
    </reaction>
</comment>
<comment type="subunit">
    <text evidence="1">F-type ATPases have 2 components, CF(1) - the catalytic core - and CF(0) - the membrane proton channel. CF(1) has five subunits: alpha(3), beta(3), gamma(1), delta(1), epsilon(1). CF(0) has three main subunits: a(1), b(2) and c(9-12). The alpha and beta chains form an alternating ring which encloses part of the gamma chain. CF(1) is attached to CF(0) by a central stalk formed by the gamma and epsilon chains, while a peripheral stalk is formed by the delta and b chains.</text>
</comment>
<comment type="subcellular location">
    <subcellularLocation>
        <location evidence="1">Cell membrane</location>
        <topology evidence="1">Peripheral membrane protein</topology>
    </subcellularLocation>
</comment>
<comment type="similarity">
    <text evidence="1">Belongs to the ATPase alpha/beta chains family.</text>
</comment>
<feature type="chain" id="PRO_0000144417" description="ATP synthase subunit beta">
    <location>
        <begin position="1"/>
        <end position="473"/>
    </location>
</feature>
<feature type="binding site" evidence="1">
    <location>
        <begin position="158"/>
        <end position="165"/>
    </location>
    <ligand>
        <name>ATP</name>
        <dbReference type="ChEBI" id="CHEBI:30616"/>
    </ligand>
</feature>
<dbReference type="EC" id="7.1.2.2" evidence="1"/>
<dbReference type="EMBL" id="D38058">
    <property type="protein sequence ID" value="BAA07248.1"/>
    <property type="molecule type" value="Genomic_DNA"/>
</dbReference>
<dbReference type="BMRB" id="P41009"/>
<dbReference type="SMR" id="P41009"/>
<dbReference type="GO" id="GO:0005886">
    <property type="term" value="C:plasma membrane"/>
    <property type="evidence" value="ECO:0007669"/>
    <property type="project" value="UniProtKB-SubCell"/>
</dbReference>
<dbReference type="GO" id="GO:0045259">
    <property type="term" value="C:proton-transporting ATP synthase complex"/>
    <property type="evidence" value="ECO:0007669"/>
    <property type="project" value="UniProtKB-KW"/>
</dbReference>
<dbReference type="GO" id="GO:0005524">
    <property type="term" value="F:ATP binding"/>
    <property type="evidence" value="ECO:0007669"/>
    <property type="project" value="UniProtKB-UniRule"/>
</dbReference>
<dbReference type="GO" id="GO:0016887">
    <property type="term" value="F:ATP hydrolysis activity"/>
    <property type="evidence" value="ECO:0007669"/>
    <property type="project" value="InterPro"/>
</dbReference>
<dbReference type="GO" id="GO:0046933">
    <property type="term" value="F:proton-transporting ATP synthase activity, rotational mechanism"/>
    <property type="evidence" value="ECO:0007669"/>
    <property type="project" value="UniProtKB-UniRule"/>
</dbReference>
<dbReference type="CDD" id="cd18110">
    <property type="entry name" value="ATP-synt_F1_beta_C"/>
    <property type="match status" value="1"/>
</dbReference>
<dbReference type="CDD" id="cd18115">
    <property type="entry name" value="ATP-synt_F1_beta_N"/>
    <property type="match status" value="1"/>
</dbReference>
<dbReference type="CDD" id="cd01133">
    <property type="entry name" value="F1-ATPase_beta_CD"/>
    <property type="match status" value="1"/>
</dbReference>
<dbReference type="FunFam" id="1.10.1140.10:FF:000001">
    <property type="entry name" value="ATP synthase subunit beta"/>
    <property type="match status" value="1"/>
</dbReference>
<dbReference type="FunFam" id="2.40.10.170:FF:000005">
    <property type="entry name" value="ATP synthase subunit beta"/>
    <property type="match status" value="1"/>
</dbReference>
<dbReference type="FunFam" id="3.40.50.300:FF:000004">
    <property type="entry name" value="ATP synthase subunit beta"/>
    <property type="match status" value="1"/>
</dbReference>
<dbReference type="Gene3D" id="2.40.10.170">
    <property type="match status" value="1"/>
</dbReference>
<dbReference type="Gene3D" id="1.10.1140.10">
    <property type="entry name" value="Bovine Mitochondrial F1-atpase, Atp Synthase Beta Chain, Chain D, domain 3"/>
    <property type="match status" value="1"/>
</dbReference>
<dbReference type="Gene3D" id="3.40.50.300">
    <property type="entry name" value="P-loop containing nucleotide triphosphate hydrolases"/>
    <property type="match status" value="1"/>
</dbReference>
<dbReference type="HAMAP" id="MF_01347">
    <property type="entry name" value="ATP_synth_beta_bact"/>
    <property type="match status" value="1"/>
</dbReference>
<dbReference type="InterPro" id="IPR003593">
    <property type="entry name" value="AAA+_ATPase"/>
</dbReference>
<dbReference type="InterPro" id="IPR055190">
    <property type="entry name" value="ATP-synt_VA_C"/>
</dbReference>
<dbReference type="InterPro" id="IPR005722">
    <property type="entry name" value="ATP_synth_F1_bsu"/>
</dbReference>
<dbReference type="InterPro" id="IPR020003">
    <property type="entry name" value="ATPase_a/bsu_AS"/>
</dbReference>
<dbReference type="InterPro" id="IPR050053">
    <property type="entry name" value="ATPase_alpha/beta_chains"/>
</dbReference>
<dbReference type="InterPro" id="IPR004100">
    <property type="entry name" value="ATPase_F1/V1/A1_a/bsu_N"/>
</dbReference>
<dbReference type="InterPro" id="IPR036121">
    <property type="entry name" value="ATPase_F1/V1/A1_a/bsu_N_sf"/>
</dbReference>
<dbReference type="InterPro" id="IPR000194">
    <property type="entry name" value="ATPase_F1/V1/A1_a/bsu_nucl-bd"/>
</dbReference>
<dbReference type="InterPro" id="IPR024034">
    <property type="entry name" value="ATPase_F1/V1_b/a_C"/>
</dbReference>
<dbReference type="InterPro" id="IPR027417">
    <property type="entry name" value="P-loop_NTPase"/>
</dbReference>
<dbReference type="NCBIfam" id="TIGR01039">
    <property type="entry name" value="atpD"/>
    <property type="match status" value="1"/>
</dbReference>
<dbReference type="PANTHER" id="PTHR15184">
    <property type="entry name" value="ATP SYNTHASE"/>
    <property type="match status" value="1"/>
</dbReference>
<dbReference type="PANTHER" id="PTHR15184:SF71">
    <property type="entry name" value="ATP SYNTHASE SUBUNIT BETA, MITOCHONDRIAL"/>
    <property type="match status" value="1"/>
</dbReference>
<dbReference type="Pfam" id="PF00006">
    <property type="entry name" value="ATP-synt_ab"/>
    <property type="match status" value="1"/>
</dbReference>
<dbReference type="Pfam" id="PF02874">
    <property type="entry name" value="ATP-synt_ab_N"/>
    <property type="match status" value="1"/>
</dbReference>
<dbReference type="Pfam" id="PF22919">
    <property type="entry name" value="ATP-synt_VA_C"/>
    <property type="match status" value="1"/>
</dbReference>
<dbReference type="SMART" id="SM00382">
    <property type="entry name" value="AAA"/>
    <property type="match status" value="1"/>
</dbReference>
<dbReference type="SUPFAM" id="SSF47917">
    <property type="entry name" value="C-terminal domain of alpha and beta subunits of F1 ATP synthase"/>
    <property type="match status" value="1"/>
</dbReference>
<dbReference type="SUPFAM" id="SSF50615">
    <property type="entry name" value="N-terminal domain of alpha and beta subunits of F1 ATP synthase"/>
    <property type="match status" value="1"/>
</dbReference>
<dbReference type="SUPFAM" id="SSF52540">
    <property type="entry name" value="P-loop containing nucleoside triphosphate hydrolases"/>
    <property type="match status" value="1"/>
</dbReference>
<dbReference type="PROSITE" id="PS00152">
    <property type="entry name" value="ATPASE_ALPHA_BETA"/>
    <property type="match status" value="1"/>
</dbReference>
<name>ATPB_BACCA</name>
<gene>
    <name evidence="1" type="primary">atpD</name>
</gene>
<evidence type="ECO:0000255" key="1">
    <source>
        <dbReference type="HAMAP-Rule" id="MF_01347"/>
    </source>
</evidence>
<keyword id="KW-0066">ATP synthesis</keyword>
<keyword id="KW-0067">ATP-binding</keyword>
<keyword id="KW-1003">Cell membrane</keyword>
<keyword id="KW-0139">CF(1)</keyword>
<keyword id="KW-0375">Hydrogen ion transport</keyword>
<keyword id="KW-0406">Ion transport</keyword>
<keyword id="KW-0472">Membrane</keyword>
<keyword id="KW-0547">Nucleotide-binding</keyword>
<keyword id="KW-1278">Translocase</keyword>
<keyword id="KW-0813">Transport</keyword>
<proteinExistence type="inferred from homology"/>
<sequence>MTRGRVIQVMGPVVDVKFENGHLPAIYNALKIQHKARNENEVDIDLTLEVALHLGDDTVRTIAMASTDGLIRGMEVIDTGAPISVPVGEVTLGRVFNVLGEPIDLEGDIPADARRDPIHRPAPKFEELATEVEILETGIKVVDLLAPYIKGGKIGLFGGAGVGKTVLIQELIHNIAQEHGGISVFAGVGERTREGNDLYHEMKDSGVISKTAMVFGQMNEPPGARMRVALTGLTMAEYFRDEQGQDVLLFIDNIFRFTQAGSEVSALLGRMPSAVGYQPTLATEMGQLQERITSTAKGSTTSIQAIYVPADDYTDPAPATTFSHLDATTNLERNVAEMGIYPAVDPLASTSRALAPEIVGEEHYQVARKVQQTLQRYKELQDIIAILGMDELSDEDKLVVHRARRIQFFLSQNFHVAEQFTGQPGSYVPVKETVRGFKEILEGKYDHLPEDRFRLVGRIEEVVEKAKAMGVEV</sequence>